<organism>
    <name type="scientific">Yersinia pseudotuberculosis serotype O:3 (strain YPIII)</name>
    <dbReference type="NCBI Taxonomy" id="502800"/>
    <lineage>
        <taxon>Bacteria</taxon>
        <taxon>Pseudomonadati</taxon>
        <taxon>Pseudomonadota</taxon>
        <taxon>Gammaproteobacteria</taxon>
        <taxon>Enterobacterales</taxon>
        <taxon>Yersiniaceae</taxon>
        <taxon>Yersinia</taxon>
    </lineage>
</organism>
<name>Y2680_YERPY</name>
<protein>
    <recommendedName>
        <fullName evidence="1">Uncharacterized MFS-type transporter YPK_2680</fullName>
    </recommendedName>
</protein>
<comment type="subcellular location">
    <subcellularLocation>
        <location evidence="1">Cell inner membrane</location>
        <topology evidence="1">Multi-pass membrane protein</topology>
    </subcellularLocation>
</comment>
<comment type="similarity">
    <text evidence="1">Belongs to the major facilitator superfamily. YcaD (TC 2.A.1.26) family.</text>
</comment>
<dbReference type="EMBL" id="CP000950">
    <property type="protein sequence ID" value="ACA68957.1"/>
    <property type="molecule type" value="Genomic_DNA"/>
</dbReference>
<dbReference type="RefSeq" id="WP_012304301.1">
    <property type="nucleotide sequence ID" value="NZ_CP009792.1"/>
</dbReference>
<dbReference type="SMR" id="B1JRE9"/>
<dbReference type="KEGG" id="ypy:YPK_2680"/>
<dbReference type="PATRIC" id="fig|502800.11.peg.3380"/>
<dbReference type="GO" id="GO:0005886">
    <property type="term" value="C:plasma membrane"/>
    <property type="evidence" value="ECO:0007669"/>
    <property type="project" value="UniProtKB-SubCell"/>
</dbReference>
<dbReference type="GO" id="GO:0022857">
    <property type="term" value="F:transmembrane transporter activity"/>
    <property type="evidence" value="ECO:0007669"/>
    <property type="project" value="UniProtKB-UniRule"/>
</dbReference>
<dbReference type="CDD" id="cd17477">
    <property type="entry name" value="MFS_YcaD_like"/>
    <property type="match status" value="1"/>
</dbReference>
<dbReference type="FunFam" id="1.20.1250.20:FF:000066">
    <property type="entry name" value="Uncharacterized MFS-type transporter YcaD"/>
    <property type="match status" value="1"/>
</dbReference>
<dbReference type="Gene3D" id="1.20.1250.20">
    <property type="entry name" value="MFS general substrate transporter like domains"/>
    <property type="match status" value="2"/>
</dbReference>
<dbReference type="HAMAP" id="MF_01149">
    <property type="entry name" value="MFS_YcaD"/>
    <property type="match status" value="1"/>
</dbReference>
<dbReference type="InterPro" id="IPR011701">
    <property type="entry name" value="MFS"/>
</dbReference>
<dbReference type="InterPro" id="IPR020846">
    <property type="entry name" value="MFS_dom"/>
</dbReference>
<dbReference type="InterPro" id="IPR036259">
    <property type="entry name" value="MFS_trans_sf"/>
</dbReference>
<dbReference type="InterPro" id="IPR023745">
    <property type="entry name" value="MFS_YcaD"/>
</dbReference>
<dbReference type="InterPro" id="IPR047200">
    <property type="entry name" value="MFS_YcaD-like"/>
</dbReference>
<dbReference type="NCBIfam" id="NF002962">
    <property type="entry name" value="PRK03633.1"/>
    <property type="match status" value="1"/>
</dbReference>
<dbReference type="PANTHER" id="PTHR23521">
    <property type="entry name" value="TRANSPORTER MFS SUPERFAMILY"/>
    <property type="match status" value="1"/>
</dbReference>
<dbReference type="PANTHER" id="PTHR23521:SF2">
    <property type="entry name" value="TRANSPORTER MFS SUPERFAMILY"/>
    <property type="match status" value="1"/>
</dbReference>
<dbReference type="Pfam" id="PF07690">
    <property type="entry name" value="MFS_1"/>
    <property type="match status" value="1"/>
</dbReference>
<dbReference type="SUPFAM" id="SSF103473">
    <property type="entry name" value="MFS general substrate transporter"/>
    <property type="match status" value="1"/>
</dbReference>
<dbReference type="PROSITE" id="PS50850">
    <property type="entry name" value="MFS"/>
    <property type="match status" value="1"/>
</dbReference>
<accession>B1JRE9</accession>
<sequence>MSAYSRPVLLLLCGLLLFTISIAVLNTLVPLWLSHQQLPTWQVGMVSSSYFTGNLVGTLIAGRFIQQLGFNRSYHCSCILFALATCGLMLTVDFWSWLGWRFLAGIACALIWVIVESALLRSGTLTNRGQLLAAYMMVYYLGTVIGQLLLGIVSTQLLSVIPWVGALVITAMLPLLFAQFSHQSRHESPPIAVWPMLKRRSARLGINGCIISGVLLGSLYGLLPLYLSHKGMSDASVGGRMALLVSSGIIGQWPMGRMADRYGRLLVLRIQVFVVILGSVAILGNYAMAPALFILGCAGFTLYPVAMAWACEKASADELVAMNQALLMSYTLGSLAGPTMTSLLMQRYSDNLLFIMIAGVAFVYLMMLLRKPDHQQTPYAAV</sequence>
<gene>
    <name type="ordered locus">YPK_2680</name>
</gene>
<keyword id="KW-0997">Cell inner membrane</keyword>
<keyword id="KW-1003">Cell membrane</keyword>
<keyword id="KW-0472">Membrane</keyword>
<keyword id="KW-0812">Transmembrane</keyword>
<keyword id="KW-1133">Transmembrane helix</keyword>
<keyword id="KW-0813">Transport</keyword>
<reference key="1">
    <citation type="submission" date="2008-02" db="EMBL/GenBank/DDBJ databases">
        <title>Complete sequence of Yersinia pseudotuberculosis YPIII.</title>
        <authorList>
            <consortium name="US DOE Joint Genome Institute"/>
            <person name="Copeland A."/>
            <person name="Lucas S."/>
            <person name="Lapidus A."/>
            <person name="Glavina del Rio T."/>
            <person name="Dalin E."/>
            <person name="Tice H."/>
            <person name="Bruce D."/>
            <person name="Goodwin L."/>
            <person name="Pitluck S."/>
            <person name="Munk A.C."/>
            <person name="Brettin T."/>
            <person name="Detter J.C."/>
            <person name="Han C."/>
            <person name="Tapia R."/>
            <person name="Schmutz J."/>
            <person name="Larimer F."/>
            <person name="Land M."/>
            <person name="Hauser L."/>
            <person name="Challacombe J.F."/>
            <person name="Green L."/>
            <person name="Lindler L.E."/>
            <person name="Nikolich M.P."/>
            <person name="Richardson P."/>
        </authorList>
    </citation>
    <scope>NUCLEOTIDE SEQUENCE [LARGE SCALE GENOMIC DNA]</scope>
    <source>
        <strain>YPIII</strain>
    </source>
</reference>
<feature type="chain" id="PRO_1000137501" description="Uncharacterized MFS-type transporter YPK_2680">
    <location>
        <begin position="1"/>
        <end position="382"/>
    </location>
</feature>
<feature type="transmembrane region" description="Helical" evidence="1">
    <location>
        <begin position="8"/>
        <end position="28"/>
    </location>
</feature>
<feature type="transmembrane region" description="Helical" evidence="1">
    <location>
        <begin position="41"/>
        <end position="61"/>
    </location>
</feature>
<feature type="transmembrane region" description="Helical" evidence="1">
    <location>
        <begin position="73"/>
        <end position="93"/>
    </location>
</feature>
<feature type="transmembrane region" description="Helical" evidence="1">
    <location>
        <begin position="94"/>
        <end position="114"/>
    </location>
</feature>
<feature type="transmembrane region" description="Helical" evidence="1">
    <location>
        <begin position="133"/>
        <end position="153"/>
    </location>
</feature>
<feature type="transmembrane region" description="Helical" evidence="1">
    <location>
        <begin position="157"/>
        <end position="177"/>
    </location>
</feature>
<feature type="transmembrane region" description="Helical" evidence="1">
    <location>
        <begin position="208"/>
        <end position="228"/>
    </location>
</feature>
<feature type="transmembrane region" description="Helical" evidence="1">
    <location>
        <begin position="274"/>
        <end position="294"/>
    </location>
</feature>
<feature type="transmembrane region" description="Helical" evidence="1">
    <location>
        <begin position="325"/>
        <end position="345"/>
    </location>
</feature>
<feature type="transmembrane region" description="Helical" evidence="1">
    <location>
        <begin position="349"/>
        <end position="369"/>
    </location>
</feature>
<proteinExistence type="inferred from homology"/>
<evidence type="ECO:0000255" key="1">
    <source>
        <dbReference type="HAMAP-Rule" id="MF_01149"/>
    </source>
</evidence>